<name>GB_HCMVT</name>
<organismHost>
    <name type="scientific">Homo sapiens</name>
    <name type="common">Human</name>
    <dbReference type="NCBI Taxonomy" id="9606"/>
</organismHost>
<protein>
    <recommendedName>
        <fullName evidence="3">Envelope glycoprotein B</fullName>
        <shortName evidence="3">gB</shortName>
    </recommendedName>
</protein>
<reference key="1">
    <citation type="journal article" date="1988" name="Virology">
        <title>Human cytomegalovirus strain Towne glycoprotein B is processed by proteolytic cleavage.</title>
        <authorList>
            <person name="Spaete R.R."/>
            <person name="Thayer R.M."/>
            <person name="Probert W.S."/>
            <person name="Masiarz F.R."/>
            <person name="Chamberlain S.H."/>
            <person name="Rasmussen L."/>
            <person name="Merigan T.C."/>
            <person name="Pachl C."/>
        </authorList>
    </citation>
    <scope>NUCLEOTIDE SEQUENCE [MRNA]</scope>
</reference>
<reference key="2">
    <citation type="journal article" date="1993" name="Virology">
        <title>Initiation of human cytomegalovirus infection requires initial interaction with cell surface heparan sulfate.</title>
        <authorList>
            <person name="Compton T."/>
            <person name="Nowlin D.M."/>
            <person name="Cooper N.R."/>
        </authorList>
    </citation>
    <scope>INTERACTION WITH HEPARAN SULFATE</scope>
</reference>
<reference key="3">
    <citation type="journal article" date="2002" name="Immunity">
        <title>Human cytomegalovirus binding to DC-SIGN is required for dendritic cell infection and target cell trans-infection.</title>
        <authorList>
            <person name="Halary F."/>
            <person name="Amara A."/>
            <person name="Lortat-Jacob H."/>
            <person name="Messerle M."/>
            <person name="Delaunay T."/>
            <person name="Houles C."/>
            <person name="Fieschi F."/>
            <person name="Arenzana-Seisdedos F."/>
            <person name="Moreau J.-F."/>
            <person name="Dechanet-Merville J."/>
        </authorList>
    </citation>
    <scope>FUNCTION</scope>
    <scope>INTERACTION WITH HUMAN CD209/DC-SIGN</scope>
</reference>
<reference key="4">
    <citation type="journal article" date="2003" name="Nature">
        <title>Epidermal growth factor receptor is a cellular receptor for human cytomegalovirus.</title>
        <authorList>
            <person name="Wang X."/>
            <person name="Huong S.M."/>
            <person name="Chiu M.L."/>
            <person name="Raab-Traub N."/>
            <person name="Huang E.S."/>
        </authorList>
    </citation>
    <scope>FUNCTION</scope>
    <scope>INTERACTION WITH HUMAN EGFR</scope>
</reference>
<reference key="5">
    <citation type="journal article" date="2008" name="Nature">
        <title>Platelet-derived growth factor-alpha receptor activation is required for human cytomegalovirus infection.</title>
        <authorList>
            <person name="Soroceanu L."/>
            <person name="Akhavan A."/>
            <person name="Cobbs C.S."/>
        </authorList>
    </citation>
    <scope>FUNCTION</scope>
    <scope>INTERACTION WITH HUMAN PDGFRA</scope>
</reference>
<reference key="6">
    <citation type="journal article" date="2010" name="J. Virol.">
        <title>The glycoprotein B disintegrin-like domain binds beta 1 integrin to mediate cytomegalovirus entry.</title>
        <authorList>
            <person name="Feire A.L."/>
            <person name="Roy R.M."/>
            <person name="Manley K."/>
            <person name="Compton T."/>
        </authorList>
    </citation>
    <scope>FUNCTION</scope>
    <scope>INTERACTION WITH HUMAN INTEGRIN ITGB1</scope>
</reference>
<reference key="7">
    <citation type="journal article" date="2008" name="EMBO J.">
        <title>Germline V-genes sculpt the binding site of a family of antibodies neutralizing human cytomegalovirus.</title>
        <authorList>
            <person name="Thomson C.A."/>
            <person name="Bryson S."/>
            <person name="McLean G.R."/>
            <person name="Creagh A.L."/>
            <person name="Pai E.F."/>
            <person name="Schrader J.W."/>
        </authorList>
    </citation>
    <scope>X-RAY CRYSTALLOGRAPHY (2.3 ANGSTROMS) OF 69-78</scope>
</reference>
<gene>
    <name evidence="3" type="primary">gB</name>
    <name type="ORF">UL55</name>
</gene>
<accession>P13201</accession>
<proteinExistence type="evidence at protein level"/>
<dbReference type="EMBL" id="M22343">
    <property type="protein sequence ID" value="AAA45920.1"/>
    <property type="molecule type" value="mRNA"/>
</dbReference>
<dbReference type="PIR" id="A31288">
    <property type="entry name" value="VGBETE"/>
</dbReference>
<dbReference type="PDB" id="3EYF">
    <property type="method" value="X-ray"/>
    <property type="resolution" value="2.30 A"/>
    <property type="chains" value="E/F=69-78"/>
</dbReference>
<dbReference type="PDB" id="4OSN">
    <property type="method" value="X-ray"/>
    <property type="resolution" value="1.76 A"/>
    <property type="chains" value="A=114-133, A=344-438"/>
</dbReference>
<dbReference type="PDB" id="4OT1">
    <property type="method" value="X-ray"/>
    <property type="resolution" value="2.11 A"/>
    <property type="chains" value="A=114-133, A=344-438"/>
</dbReference>
<dbReference type="PDB" id="5C6T">
    <property type="method" value="X-ray"/>
    <property type="resolution" value="3.60 A"/>
    <property type="chains" value="A=87-698"/>
</dbReference>
<dbReference type="PDB" id="7KDD">
    <property type="method" value="EM"/>
    <property type="resolution" value="3.50 A"/>
    <property type="chains" value="A/B/C=1-907"/>
</dbReference>
<dbReference type="PDB" id="7KDP">
    <property type="method" value="EM"/>
    <property type="resolution" value="3.60 A"/>
    <property type="chains" value="A/B/C=1-907"/>
</dbReference>
<dbReference type="PDB" id="8VYM">
    <property type="method" value="EM"/>
    <property type="resolution" value="3.40 A"/>
    <property type="chains" value="A/B/C=1-704"/>
</dbReference>
<dbReference type="PDB" id="8VYN">
    <property type="method" value="EM"/>
    <property type="resolution" value="2.80 A"/>
    <property type="chains" value="A/B/C=1-704"/>
</dbReference>
<dbReference type="PDBsum" id="3EYF"/>
<dbReference type="PDBsum" id="4OSN"/>
<dbReference type="PDBsum" id="4OT1"/>
<dbReference type="PDBsum" id="5C6T"/>
<dbReference type="PDBsum" id="7KDD"/>
<dbReference type="PDBsum" id="7KDP"/>
<dbReference type="PDBsum" id="8VYM"/>
<dbReference type="PDBsum" id="8VYN"/>
<dbReference type="EMDB" id="EMD-22819"/>
<dbReference type="EMDB" id="EMD-22828"/>
<dbReference type="EMDB" id="EMD-43667"/>
<dbReference type="EMDB" id="EMD-43672"/>
<dbReference type="SMR" id="P13201"/>
<dbReference type="GlyCosmos" id="P13201">
    <property type="glycosylation" value="18 sites, No reported glycans"/>
</dbReference>
<dbReference type="ABCD" id="P13201">
    <property type="antibodies" value="17 sequenced antibodies"/>
</dbReference>
<dbReference type="EvolutionaryTrace" id="P13201"/>
<dbReference type="GO" id="GO:0044175">
    <property type="term" value="C:host cell endosome membrane"/>
    <property type="evidence" value="ECO:0007669"/>
    <property type="project" value="UniProtKB-SubCell"/>
</dbReference>
<dbReference type="GO" id="GO:0044178">
    <property type="term" value="C:host cell Golgi membrane"/>
    <property type="evidence" value="ECO:0007669"/>
    <property type="project" value="UniProtKB-SubCell"/>
</dbReference>
<dbReference type="GO" id="GO:0020002">
    <property type="term" value="C:host cell plasma membrane"/>
    <property type="evidence" value="ECO:0007669"/>
    <property type="project" value="UniProtKB-SubCell"/>
</dbReference>
<dbReference type="GO" id="GO:0016020">
    <property type="term" value="C:membrane"/>
    <property type="evidence" value="ECO:0007669"/>
    <property type="project" value="UniProtKB-KW"/>
</dbReference>
<dbReference type="GO" id="GO:0019031">
    <property type="term" value="C:viral envelope"/>
    <property type="evidence" value="ECO:0007669"/>
    <property type="project" value="UniProtKB-KW"/>
</dbReference>
<dbReference type="GO" id="GO:0055036">
    <property type="term" value="C:virion membrane"/>
    <property type="evidence" value="ECO:0007669"/>
    <property type="project" value="UniProtKB-SubCell"/>
</dbReference>
<dbReference type="GO" id="GO:0046718">
    <property type="term" value="P:symbiont entry into host cell"/>
    <property type="evidence" value="ECO:0007669"/>
    <property type="project" value="UniProtKB-KW"/>
</dbReference>
<dbReference type="GO" id="GO:0019062">
    <property type="term" value="P:virion attachment to host cell"/>
    <property type="evidence" value="ECO:0007669"/>
    <property type="project" value="UniProtKB-KW"/>
</dbReference>
<dbReference type="Gene3D" id="1.20.5.1890">
    <property type="match status" value="1"/>
</dbReference>
<dbReference type="Gene3D" id="2.30.29.100">
    <property type="match status" value="2"/>
</dbReference>
<dbReference type="Gene3D" id="2.30.30.1230">
    <property type="match status" value="1"/>
</dbReference>
<dbReference type="Gene3D" id="6.10.250.3280">
    <property type="match status" value="1"/>
</dbReference>
<dbReference type="HAMAP" id="MF_04032">
    <property type="entry name" value="HSV_GB"/>
    <property type="match status" value="1"/>
</dbReference>
<dbReference type="InterPro" id="IPR021044">
    <property type="entry name" value="Glycoprot_B_antigenic_N"/>
</dbReference>
<dbReference type="InterPro" id="IPR035377">
    <property type="entry name" value="Glycoprot_B_PH1"/>
</dbReference>
<dbReference type="InterPro" id="IPR035381">
    <property type="entry name" value="Glycoprot_B_PH2"/>
</dbReference>
<dbReference type="InterPro" id="IPR038631">
    <property type="entry name" value="Glycoprot_B_PH2_sf"/>
</dbReference>
<dbReference type="InterPro" id="IPR055341">
    <property type="entry name" value="Glycoprotein_B_ecto_C"/>
</dbReference>
<dbReference type="InterPro" id="IPR000234">
    <property type="entry name" value="Herpes_Glycoprot_B"/>
</dbReference>
<dbReference type="Pfam" id="PF17416">
    <property type="entry name" value="Glycoprot_B_PH1"/>
    <property type="match status" value="1"/>
</dbReference>
<dbReference type="Pfam" id="PF17417">
    <property type="entry name" value="Glycoprot_B_PH2"/>
    <property type="match status" value="1"/>
</dbReference>
<dbReference type="Pfam" id="PF00606">
    <property type="entry name" value="Glycoprotein_B"/>
    <property type="match status" value="1"/>
</dbReference>
<dbReference type="Pfam" id="PF12154">
    <property type="entry name" value="HCMVantigenic_N"/>
    <property type="match status" value="1"/>
</dbReference>
<dbReference type="SUPFAM" id="SSF161008">
    <property type="entry name" value="Viral glycoprotein ectodomain-like"/>
    <property type="match status" value="1"/>
</dbReference>
<organism>
    <name type="scientific">Human cytomegalovirus (strain Towne)</name>
    <name type="common">HHV-5</name>
    <name type="synonym">Human herpesvirus 5</name>
    <dbReference type="NCBI Taxonomy" id="10363"/>
    <lineage>
        <taxon>Viruses</taxon>
        <taxon>Duplodnaviria</taxon>
        <taxon>Heunggongvirae</taxon>
        <taxon>Peploviricota</taxon>
        <taxon>Herviviricetes</taxon>
        <taxon>Herpesvirales</taxon>
        <taxon>Orthoherpesviridae</taxon>
        <taxon>Betaherpesvirinae</taxon>
        <taxon>Cytomegalovirus</taxon>
        <taxon>Cytomegalovirus humanbeta5</taxon>
        <taxon>Human cytomegalovirus</taxon>
    </lineage>
</organism>
<keyword id="KW-0002">3D-structure</keyword>
<keyword id="KW-1015">Disulfide bond</keyword>
<keyword id="KW-0325">Glycoprotein</keyword>
<keyword id="KW-1032">Host cell membrane</keyword>
<keyword id="KW-1039">Host endosome</keyword>
<keyword id="KW-1040">Host Golgi apparatus</keyword>
<keyword id="KW-1043">Host membrane</keyword>
<keyword id="KW-0945">Host-virus interaction</keyword>
<keyword id="KW-0472">Membrane</keyword>
<keyword id="KW-0732">Signal</keyword>
<keyword id="KW-0812">Transmembrane</keyword>
<keyword id="KW-1133">Transmembrane helix</keyword>
<keyword id="KW-1161">Viral attachment to host cell</keyword>
<keyword id="KW-0261">Viral envelope protein</keyword>
<keyword id="KW-0946">Virion</keyword>
<keyword id="KW-1160">Virus entry into host cell</keyword>
<feature type="signal peptide" evidence="3">
    <location>
        <begin position="1"/>
        <end position="22"/>
    </location>
</feature>
<feature type="chain" id="PRO_0000436645" description="Envelope glycoprotein B" evidence="3">
    <location>
        <begin position="23"/>
        <end position="907"/>
    </location>
</feature>
<feature type="topological domain" description="Virion surface" evidence="3">
    <location>
        <begin position="23"/>
        <end position="751"/>
    </location>
</feature>
<feature type="transmembrane region" description="Helical" evidence="3">
    <location>
        <begin position="752"/>
        <end position="772"/>
    </location>
</feature>
<feature type="topological domain" description="Intravirion" evidence="3">
    <location>
        <begin position="773"/>
        <end position="907"/>
    </location>
</feature>
<feature type="region of interest" description="Disordered" evidence="4">
    <location>
        <begin position="29"/>
        <end position="62"/>
    </location>
</feature>
<feature type="region of interest" description="Involved in fusion and/or binding to host membrane" evidence="3">
    <location>
        <begin position="152"/>
        <end position="158"/>
    </location>
</feature>
<feature type="region of interest" description="Involved in fusion and/or binding to host membrane" evidence="3">
    <location>
        <begin position="237"/>
        <end position="244"/>
    </location>
</feature>
<feature type="region of interest" description="Hydrophobic membrane proximal region" evidence="3">
    <location>
        <begin position="697"/>
        <end position="749"/>
    </location>
</feature>
<feature type="region of interest" description="Hydrophobic membrane proximal region">
    <location>
        <begin position="708"/>
        <end position="748"/>
    </location>
</feature>
<feature type="region of interest" description="Disordered" evidence="4">
    <location>
        <begin position="798"/>
        <end position="838"/>
    </location>
</feature>
<feature type="region of interest" description="Disordered" evidence="4">
    <location>
        <begin position="860"/>
        <end position="907"/>
    </location>
</feature>
<feature type="short sequence motif" description="Internalization motif" evidence="3">
    <location>
        <begin position="895"/>
        <end position="898"/>
    </location>
</feature>
<feature type="compositionally biased region" description="Low complexity" evidence="4">
    <location>
        <begin position="41"/>
        <end position="62"/>
    </location>
</feature>
<feature type="compositionally biased region" description="Polar residues" evidence="4">
    <location>
        <begin position="798"/>
        <end position="810"/>
    </location>
</feature>
<feature type="compositionally biased region" description="Polar residues" evidence="4">
    <location>
        <begin position="860"/>
        <end position="877"/>
    </location>
</feature>
<feature type="compositionally biased region" description="Basic and acidic residues" evidence="4">
    <location>
        <begin position="878"/>
        <end position="887"/>
    </location>
</feature>
<feature type="site" description="Cleavage; by host furin" evidence="2">
    <location>
        <begin position="460"/>
        <end position="461"/>
    </location>
</feature>
<feature type="glycosylation site" description="N-linked (GlcNAc...) asparagine; by host" evidence="3">
    <location>
        <position position="68"/>
    </location>
</feature>
<feature type="glycosylation site" description="N-linked (GlcNAc...) asparagine; by host" evidence="3">
    <location>
        <position position="73"/>
    </location>
</feature>
<feature type="glycosylation site" description="N-linked (GlcNAc...) asparagine; by host" evidence="3">
    <location>
        <position position="85"/>
    </location>
</feature>
<feature type="glycosylation site" description="N-linked (GlcNAc...) asparagine; by host" evidence="3">
    <location>
        <position position="208"/>
    </location>
</feature>
<feature type="glycosylation site" description="N-linked (GlcNAc...) asparagine; by host" evidence="3">
    <location>
        <position position="281"/>
    </location>
</feature>
<feature type="glycosylation site" description="N-linked (GlcNAc...) asparagine; by host" evidence="3">
    <location>
        <position position="286"/>
    </location>
</feature>
<feature type="glycosylation site" description="N-linked (GlcNAc...) asparagine; by host" evidence="3">
    <location>
        <position position="302"/>
    </location>
</feature>
<feature type="glycosylation site" description="N-linked (GlcNAc...) asparagine; by host" evidence="3">
    <location>
        <position position="341"/>
    </location>
</feature>
<feature type="glycosylation site" description="N-linked (GlcNAc...) asparagine; by host" evidence="3">
    <location>
        <position position="383"/>
    </location>
</feature>
<feature type="glycosylation site" description="N-linked (GlcNAc...) asparagine; by host" evidence="3">
    <location>
        <position position="405"/>
    </location>
</feature>
<feature type="glycosylation site" description="N-linked (GlcNAc...) asparagine; by host" evidence="3">
    <location>
        <position position="409"/>
    </location>
</feature>
<feature type="glycosylation site" description="N-linked (GlcNAc...) asparagine; by host" evidence="3">
    <location>
        <position position="417"/>
    </location>
</feature>
<feature type="glycosylation site" description="N-linked (GlcNAc...) asparagine; by host" evidence="3">
    <location>
        <position position="447"/>
    </location>
</feature>
<feature type="glycosylation site" description="N-linked (GlcNAc...) asparagine; by host" evidence="3">
    <location>
        <position position="452"/>
    </location>
</feature>
<feature type="glycosylation site" description="N-linked (GlcNAc...) asparagine; by host" evidence="3">
    <location>
        <position position="456"/>
    </location>
</feature>
<feature type="glycosylation site" description="N-linked (GlcNAc...) asparagine; by host" evidence="3">
    <location>
        <position position="466"/>
    </location>
</feature>
<feature type="glycosylation site" description="N-linked (GlcNAc...) asparagine; by host" evidence="3">
    <location>
        <position position="555"/>
    </location>
</feature>
<feature type="glycosylation site" description="N-linked (GlcNAc...) asparagine; by host" evidence="3">
    <location>
        <position position="586"/>
    </location>
</feature>
<feature type="disulfide bond" evidence="3">
    <location>
        <begin position="94"/>
        <end position="551"/>
    </location>
</feature>
<feature type="disulfide bond" evidence="3">
    <location>
        <begin position="111"/>
        <end position="507"/>
    </location>
</feature>
<feature type="disulfide bond" evidence="3">
    <location>
        <begin position="185"/>
        <end position="250"/>
    </location>
</feature>
<feature type="disulfide bond" evidence="3">
    <location>
        <begin position="344"/>
        <end position="391"/>
    </location>
</feature>
<feature type="disulfide bond" evidence="3">
    <location>
        <begin position="574"/>
        <end position="611"/>
    </location>
</feature>
<feature type="strand" evidence="11">
    <location>
        <begin position="92"/>
        <end position="95"/>
    </location>
</feature>
<feature type="strand" evidence="10">
    <location>
        <begin position="120"/>
        <end position="131"/>
    </location>
</feature>
<feature type="strand" evidence="11">
    <location>
        <begin position="138"/>
        <end position="154"/>
    </location>
</feature>
<feature type="strand" evidence="11">
    <location>
        <begin position="159"/>
        <end position="169"/>
    </location>
</feature>
<feature type="helix" evidence="11">
    <location>
        <begin position="173"/>
        <end position="182"/>
    </location>
</feature>
<feature type="strand" evidence="11">
    <location>
        <begin position="184"/>
        <end position="187"/>
    </location>
</feature>
<feature type="strand" evidence="11">
    <location>
        <begin position="189"/>
        <end position="191"/>
    </location>
</feature>
<feature type="strand" evidence="11">
    <location>
        <begin position="194"/>
        <end position="196"/>
    </location>
</feature>
<feature type="strand" evidence="11">
    <location>
        <begin position="198"/>
        <end position="200"/>
    </location>
</feature>
<feature type="helix" evidence="11">
    <location>
        <begin position="202"/>
        <end position="204"/>
    </location>
</feature>
<feature type="strand" evidence="11">
    <location>
        <begin position="210"/>
        <end position="212"/>
    </location>
</feature>
<feature type="strand" evidence="11">
    <location>
        <begin position="220"/>
        <end position="222"/>
    </location>
</feature>
<feature type="strand" evidence="11">
    <location>
        <begin position="224"/>
        <end position="228"/>
    </location>
</feature>
<feature type="strand" evidence="11">
    <location>
        <begin position="241"/>
        <end position="245"/>
    </location>
</feature>
<feature type="strand" evidence="11">
    <location>
        <begin position="248"/>
        <end position="258"/>
    </location>
</feature>
<feature type="strand" evidence="11">
    <location>
        <begin position="266"/>
        <end position="268"/>
    </location>
</feature>
<feature type="strand" evidence="11">
    <location>
        <begin position="285"/>
        <end position="288"/>
    </location>
</feature>
<feature type="strand" evidence="11">
    <location>
        <begin position="294"/>
        <end position="308"/>
    </location>
</feature>
<feature type="strand" evidence="11">
    <location>
        <begin position="316"/>
        <end position="326"/>
    </location>
</feature>
<feature type="strand" evidence="11">
    <location>
        <begin position="331"/>
        <end position="335"/>
    </location>
</feature>
<feature type="helix" evidence="11">
    <location>
        <begin position="339"/>
        <end position="342"/>
    </location>
</feature>
<feature type="strand" evidence="10">
    <location>
        <begin position="346"/>
        <end position="359"/>
    </location>
</feature>
<feature type="strand" evidence="10">
    <location>
        <begin position="364"/>
        <end position="367"/>
    </location>
</feature>
<feature type="turn" evidence="11">
    <location>
        <begin position="369"/>
        <end position="372"/>
    </location>
</feature>
<feature type="strand" evidence="10">
    <location>
        <begin position="375"/>
        <end position="377"/>
    </location>
</feature>
<feature type="helix" evidence="10">
    <location>
        <begin position="387"/>
        <end position="389"/>
    </location>
</feature>
<feature type="turn" evidence="10">
    <location>
        <begin position="390"/>
        <end position="392"/>
    </location>
</feature>
<feature type="helix" evidence="10">
    <location>
        <begin position="393"/>
        <end position="407"/>
    </location>
</feature>
<feature type="strand" evidence="10">
    <location>
        <begin position="413"/>
        <end position="422"/>
    </location>
</feature>
<feature type="strand" evidence="11">
    <location>
        <begin position="424"/>
        <end position="426"/>
    </location>
</feature>
<feature type="strand" evidence="10">
    <location>
        <begin position="428"/>
        <end position="435"/>
    </location>
</feature>
<feature type="helix" evidence="11">
    <location>
        <begin position="481"/>
        <end position="520"/>
    </location>
</feature>
<feature type="turn" evidence="11">
    <location>
        <begin position="521"/>
        <end position="523"/>
    </location>
</feature>
<feature type="helix" evidence="11">
    <location>
        <begin position="525"/>
        <end position="533"/>
    </location>
</feature>
<feature type="strand" evidence="11">
    <location>
        <begin position="538"/>
        <end position="540"/>
    </location>
</feature>
<feature type="strand" evidence="11">
    <location>
        <begin position="547"/>
        <end position="553"/>
    </location>
</feature>
<feature type="strand" evidence="11">
    <location>
        <begin position="573"/>
        <end position="577"/>
    </location>
</feature>
<feature type="strand" evidence="11">
    <location>
        <begin position="579"/>
        <end position="583"/>
    </location>
</feature>
<feature type="strand" evidence="11">
    <location>
        <begin position="590"/>
        <end position="596"/>
    </location>
</feature>
<feature type="turn" evidence="11">
    <location>
        <begin position="597"/>
        <end position="599"/>
    </location>
</feature>
<feature type="strand" evidence="11">
    <location>
        <begin position="600"/>
        <end position="602"/>
    </location>
</feature>
<feature type="strand" evidence="11">
    <location>
        <begin position="608"/>
        <end position="610"/>
    </location>
</feature>
<feature type="strand" evidence="11">
    <location>
        <begin position="617"/>
        <end position="620"/>
    </location>
</feature>
<feature type="strand" evidence="11">
    <location>
        <begin position="622"/>
        <end position="629"/>
    </location>
</feature>
<feature type="strand" evidence="11">
    <location>
        <begin position="632"/>
        <end position="637"/>
    </location>
</feature>
<feature type="helix" evidence="11">
    <location>
        <begin position="639"/>
        <end position="641"/>
    </location>
</feature>
<feature type="strand" evidence="11">
    <location>
        <begin position="642"/>
        <end position="644"/>
    </location>
</feature>
<feature type="helix" evidence="11">
    <location>
        <begin position="669"/>
        <end position="673"/>
    </location>
</feature>
<feature type="helix" evidence="11">
    <location>
        <begin position="680"/>
        <end position="691"/>
    </location>
</feature>
<comment type="function">
    <text evidence="5 6 7 8">Envelope glycoprotein that plays a role in host cell entry, cell to-cell virus transmission, and fusion of infected cells. May be involved in the initial attachment via binding to heparan sulfate together with the gM/gN complex that binds heparin with higher affinity. Interacts with host integrin ITGB1, PDGFRA and EGFR that likely serve as postattachment entry receptors. Also participates in the fusion of viral and cellular membranes leading to virus entry into the host cell. Membrane fusion is mediated by the fusion machinery composed at least of gB and the heterodimer gH/gL.</text>
</comment>
<comment type="subunit">
    <text evidence="3 5 6 7 8 9">Homotrimer; disulfide-linked. Binds to heparan sulfate proteoglycans. Interacts with gH/gL heterodimer (By similarity). Interacts with host C-type lectin CD209/DC-SIGN. Interacts with host ITGB1, EGFR, and PDGFRA.</text>
</comment>
<comment type="subcellular location">
    <subcellularLocation>
        <location evidence="3">Virion membrane</location>
        <topology evidence="3">Single-pass type I membrane protein</topology>
    </subcellularLocation>
    <subcellularLocation>
        <location evidence="3">Host cell membrane</location>
        <topology evidence="3">Single-pass type I membrane protein</topology>
    </subcellularLocation>
    <subcellularLocation>
        <location evidence="3">Host endosome membrane</location>
        <topology evidence="3">Single-pass type I membrane protein</topology>
    </subcellularLocation>
    <subcellularLocation>
        <location evidence="3">Host Golgi apparatus membrane</location>
        <topology evidence="3">Single-pass type I membrane protein</topology>
    </subcellularLocation>
    <text evidence="3">During virion morphogenesis, this protein probably accumulates in the endosomes and trans-Golgi where secondary envelopment occurs. It is probably transported to the cell surface from where it is endocytosed and directed to the trans-Golgi network (TGN).</text>
</comment>
<comment type="PTM">
    <text evidence="1">A proteolytic cleavage by host furin generates two subunits that remain linked by disulfide bonds.</text>
</comment>
<comment type="similarity">
    <text evidence="3">Belongs to the herpesviridae glycoprotein B family.</text>
</comment>
<evidence type="ECO:0000250" key="1"/>
<evidence type="ECO:0000255" key="2"/>
<evidence type="ECO:0000255" key="3">
    <source>
        <dbReference type="HAMAP-Rule" id="MF_04032"/>
    </source>
</evidence>
<evidence type="ECO:0000256" key="4">
    <source>
        <dbReference type="SAM" id="MobiDB-lite"/>
    </source>
</evidence>
<evidence type="ECO:0000269" key="5">
    <source>
    </source>
</evidence>
<evidence type="ECO:0000269" key="6">
    <source>
    </source>
</evidence>
<evidence type="ECO:0000269" key="7">
    <source>
    </source>
</evidence>
<evidence type="ECO:0000269" key="8">
    <source>
    </source>
</evidence>
<evidence type="ECO:0000269" key="9">
    <source>
    </source>
</evidence>
<evidence type="ECO:0007829" key="10">
    <source>
        <dbReference type="PDB" id="4OSN"/>
    </source>
</evidence>
<evidence type="ECO:0007829" key="11">
    <source>
        <dbReference type="PDB" id="7KDD"/>
    </source>
</evidence>
<sequence>MESRIWCLVVCVNLCIVCLGAAVSSSSTRGTSATHSHHSSHTTSAAHSRSGSVSQRVTSSQTVSHGVNETIYNTTLKYGDVVGVNTTKYPYRVCSMAQGTDLIRFERNIVCTSMKPINEDLDEGIMVVYKRNIVAHTFKVRVYQKVLTFRRSYAYIHTTYLLGSNTEYVAPPMWEIHHINSHSQCYSSYSRVIAGTVFVAYHRDSYENKTMQLMPDDYSNTHSTRYVTVKDQWHSRGSTWLYRETCNLNCMVTITTARSKYPYHFFATSTGDVVDISPFYNGTNRNASYFGENADKFFIFPNYTIVSDFGRPNSALETHRLVAFLERADSVISWDIQDEKNVTCQLTFWEASERTIRSEAEDSYHFSSAKMTATFLSKKQEVNMSDSALDCVRDEAINKLQQIFNTSYNQTYEKYGNVSVFETTGGLVVFWQGIKQKSLVELERLANRSSLNLTHNRTKRSTDGNNATHLSNMESVHNLVYAQLQFTYDTLRGYINRALAQIAEAWCVDQRRTLEVFKELSKINPSAILSAIYNKPIAARFMGDVLGLASCVTINQTSVKVLRDMNVKESPGRCYSRPVVIFNFANSSYVQYGQLGEDNEILLGNHRTEECQLPSLKIFIAGNSAYEYVDYLFKRMIDLSSISTVDSMIALDIDPLENTDFRVLELYSQKELRSSNVFDLEEIMREFNSYKQRVKYVEDKVVDPLPPYLKGLDDLMSGLGAAGKAVGVAIGAVGGAVASVVEGVATFLKNPFGAFTIILVAIAVVIIIYLIYTRQRRLCMQPLQNLFPYLVSADGTTVTSGNTKDTSLQAPPSYEESVYNSGRKGPGPPSSDASTAAPPYTNEQAYQMLLALVRLDAEQRAQQNGTDSLDGQTGTQDKGQKPNLLDRLRHRKNGYRHLKDSDEEENV</sequence>